<reference key="1">
    <citation type="submission" date="2007-09" db="EMBL/GenBank/DDBJ databases">
        <title>Complete genome sequence of Rickettsia canadensis.</title>
        <authorList>
            <person name="Madan A."/>
            <person name="Fahey J."/>
            <person name="Helton E."/>
            <person name="Ketteman M."/>
            <person name="Madan A."/>
            <person name="Rodrigues S."/>
            <person name="Sanchez A."/>
            <person name="Whiting M."/>
            <person name="Dasch G."/>
            <person name="Eremeeva M."/>
        </authorList>
    </citation>
    <scope>NUCLEOTIDE SEQUENCE [LARGE SCALE GENOMIC DNA]</scope>
    <source>
        <strain>McKiel</strain>
    </source>
</reference>
<sequence>MSSIDKKELEKFEKISHNWWNKDGDFGILHCINPIRLEYIIEKITSHYNDISKLEILDVGCGGGLIATPLAAQGFNVTAIDALQSNIETATAYAKENGVKINYLQSTIEELKSNKLYDVVICLEVIEHVENVQQFILNLVQHIKPNGIAIISTINRMKKAYILGIIVAEYILGWVPKNTHNYSKFLKPSEIYEMLTDTGIEIKELKGLIYDMAKNEWKLSDNIEVNYFMYLERNTH</sequence>
<gene>
    <name evidence="1" type="primary">ubiG</name>
    <name type="ordered locus">A1E_01640</name>
</gene>
<organism>
    <name type="scientific">Rickettsia canadensis (strain McKiel)</name>
    <dbReference type="NCBI Taxonomy" id="293613"/>
    <lineage>
        <taxon>Bacteria</taxon>
        <taxon>Pseudomonadati</taxon>
        <taxon>Pseudomonadota</taxon>
        <taxon>Alphaproteobacteria</taxon>
        <taxon>Rickettsiales</taxon>
        <taxon>Rickettsiaceae</taxon>
        <taxon>Rickettsieae</taxon>
        <taxon>Rickettsia</taxon>
        <taxon>belli group</taxon>
    </lineage>
</organism>
<dbReference type="EC" id="2.1.1.222" evidence="1"/>
<dbReference type="EC" id="2.1.1.64" evidence="1"/>
<dbReference type="EMBL" id="CP000409">
    <property type="protein sequence ID" value="ABV73273.1"/>
    <property type="molecule type" value="Genomic_DNA"/>
</dbReference>
<dbReference type="RefSeq" id="WP_012148472.1">
    <property type="nucleotide sequence ID" value="NC_009879.1"/>
</dbReference>
<dbReference type="SMR" id="A8EY40"/>
<dbReference type="STRING" id="293613.A1E_01640"/>
<dbReference type="KEGG" id="rcm:A1E_01640"/>
<dbReference type="eggNOG" id="COG2227">
    <property type="taxonomic scope" value="Bacteria"/>
</dbReference>
<dbReference type="HOGENOM" id="CLU_042432_0_0_5"/>
<dbReference type="UniPathway" id="UPA00232"/>
<dbReference type="Proteomes" id="UP000007056">
    <property type="component" value="Chromosome"/>
</dbReference>
<dbReference type="GO" id="GO:0102208">
    <property type="term" value="F:2-polyprenyl-6-hydroxyphenol methylase activity"/>
    <property type="evidence" value="ECO:0007669"/>
    <property type="project" value="UniProtKB-EC"/>
</dbReference>
<dbReference type="GO" id="GO:0061542">
    <property type="term" value="F:3-demethylubiquinol 3-O-methyltransferase activity"/>
    <property type="evidence" value="ECO:0007669"/>
    <property type="project" value="UniProtKB-UniRule"/>
</dbReference>
<dbReference type="GO" id="GO:0010420">
    <property type="term" value="F:polyprenyldihydroxybenzoate methyltransferase activity"/>
    <property type="evidence" value="ECO:0007669"/>
    <property type="project" value="InterPro"/>
</dbReference>
<dbReference type="GO" id="GO:0032259">
    <property type="term" value="P:methylation"/>
    <property type="evidence" value="ECO:0007669"/>
    <property type="project" value="UniProtKB-KW"/>
</dbReference>
<dbReference type="CDD" id="cd02440">
    <property type="entry name" value="AdoMet_MTases"/>
    <property type="match status" value="1"/>
</dbReference>
<dbReference type="Gene3D" id="3.40.50.150">
    <property type="entry name" value="Vaccinia Virus protein VP39"/>
    <property type="match status" value="1"/>
</dbReference>
<dbReference type="HAMAP" id="MF_00472">
    <property type="entry name" value="UbiG"/>
    <property type="match status" value="1"/>
</dbReference>
<dbReference type="InterPro" id="IPR029063">
    <property type="entry name" value="SAM-dependent_MTases_sf"/>
</dbReference>
<dbReference type="InterPro" id="IPR010233">
    <property type="entry name" value="UbiG_MeTrfase"/>
</dbReference>
<dbReference type="NCBIfam" id="TIGR01983">
    <property type="entry name" value="UbiG"/>
    <property type="match status" value="1"/>
</dbReference>
<dbReference type="PANTHER" id="PTHR43464">
    <property type="entry name" value="METHYLTRANSFERASE"/>
    <property type="match status" value="1"/>
</dbReference>
<dbReference type="PANTHER" id="PTHR43464:SF19">
    <property type="entry name" value="UBIQUINONE BIOSYNTHESIS O-METHYLTRANSFERASE, MITOCHONDRIAL"/>
    <property type="match status" value="1"/>
</dbReference>
<dbReference type="Pfam" id="PF13489">
    <property type="entry name" value="Methyltransf_23"/>
    <property type="match status" value="1"/>
</dbReference>
<dbReference type="SUPFAM" id="SSF53335">
    <property type="entry name" value="S-adenosyl-L-methionine-dependent methyltransferases"/>
    <property type="match status" value="1"/>
</dbReference>
<comment type="function">
    <text evidence="1">O-methyltransferase that catalyzes the 2 O-methylation steps in the ubiquinone biosynthetic pathway.</text>
</comment>
<comment type="catalytic activity">
    <reaction evidence="1">
        <text>a 3-demethylubiquinol + S-adenosyl-L-methionine = a ubiquinol + S-adenosyl-L-homocysteine + H(+)</text>
        <dbReference type="Rhea" id="RHEA:44380"/>
        <dbReference type="Rhea" id="RHEA-COMP:9566"/>
        <dbReference type="Rhea" id="RHEA-COMP:10914"/>
        <dbReference type="ChEBI" id="CHEBI:15378"/>
        <dbReference type="ChEBI" id="CHEBI:17976"/>
        <dbReference type="ChEBI" id="CHEBI:57856"/>
        <dbReference type="ChEBI" id="CHEBI:59789"/>
        <dbReference type="ChEBI" id="CHEBI:84422"/>
        <dbReference type="EC" id="2.1.1.64"/>
    </reaction>
</comment>
<comment type="catalytic activity">
    <reaction evidence="1">
        <text>a 3-(all-trans-polyprenyl)benzene-1,2-diol + S-adenosyl-L-methionine = a 2-methoxy-6-(all-trans-polyprenyl)phenol + S-adenosyl-L-homocysteine + H(+)</text>
        <dbReference type="Rhea" id="RHEA:31411"/>
        <dbReference type="Rhea" id="RHEA-COMP:9550"/>
        <dbReference type="Rhea" id="RHEA-COMP:9551"/>
        <dbReference type="ChEBI" id="CHEBI:15378"/>
        <dbReference type="ChEBI" id="CHEBI:57856"/>
        <dbReference type="ChEBI" id="CHEBI:59789"/>
        <dbReference type="ChEBI" id="CHEBI:62729"/>
        <dbReference type="ChEBI" id="CHEBI:62731"/>
        <dbReference type="EC" id="2.1.1.222"/>
    </reaction>
</comment>
<comment type="pathway">
    <text evidence="1">Cofactor biosynthesis; ubiquinone biosynthesis.</text>
</comment>
<comment type="similarity">
    <text evidence="1">Belongs to the methyltransferase superfamily. UbiG/COQ3 family.</text>
</comment>
<evidence type="ECO:0000255" key="1">
    <source>
        <dbReference type="HAMAP-Rule" id="MF_00472"/>
    </source>
</evidence>
<accession>A8EY40</accession>
<proteinExistence type="inferred from homology"/>
<name>UBIG_RICCK</name>
<protein>
    <recommendedName>
        <fullName evidence="1">Ubiquinone biosynthesis O-methyltransferase</fullName>
    </recommendedName>
    <alternativeName>
        <fullName evidence="1">2-polyprenyl-6-hydroxyphenol methylase</fullName>
        <ecNumber evidence="1">2.1.1.222</ecNumber>
    </alternativeName>
    <alternativeName>
        <fullName evidence="1">3-demethylubiquinone 3-O-methyltransferase</fullName>
        <ecNumber evidence="1">2.1.1.64</ecNumber>
    </alternativeName>
</protein>
<feature type="chain" id="PRO_1000013918" description="Ubiquinone biosynthesis O-methyltransferase">
    <location>
        <begin position="1"/>
        <end position="236"/>
    </location>
</feature>
<feature type="binding site" evidence="1">
    <location>
        <position position="36"/>
    </location>
    <ligand>
        <name>S-adenosyl-L-methionine</name>
        <dbReference type="ChEBI" id="CHEBI:59789"/>
    </ligand>
</feature>
<feature type="binding site" evidence="1">
    <location>
        <position position="60"/>
    </location>
    <ligand>
        <name>S-adenosyl-L-methionine</name>
        <dbReference type="ChEBI" id="CHEBI:59789"/>
    </ligand>
</feature>
<feature type="binding site" evidence="1">
    <location>
        <position position="81"/>
    </location>
    <ligand>
        <name>S-adenosyl-L-methionine</name>
        <dbReference type="ChEBI" id="CHEBI:59789"/>
    </ligand>
</feature>
<feature type="binding site" evidence="1">
    <location>
        <position position="123"/>
    </location>
    <ligand>
        <name>S-adenosyl-L-methionine</name>
        <dbReference type="ChEBI" id="CHEBI:59789"/>
    </ligand>
</feature>
<keyword id="KW-0489">Methyltransferase</keyword>
<keyword id="KW-0949">S-adenosyl-L-methionine</keyword>
<keyword id="KW-0808">Transferase</keyword>
<keyword id="KW-0831">Ubiquinone biosynthesis</keyword>